<comment type="function">
    <text evidence="3 4 5">Required for initial steps of body morphogenesis (PubMed:11877381). May play a role in egg laying and yolk protein clatherin-mediated endocytosis by oocytes during oogenesis (PubMed:19798448). Plays a role in the formation of muscle connections, also called muscle arm extensions, between the body wall and the motor axons in the dorsal and ventral cord (PubMed:27123983).</text>
</comment>
<comment type="subunit">
    <text evidence="3">Interacts with gex-3.</text>
</comment>
<comment type="interaction">
    <interactant intactId="EBI-1570205">
        <id>O44518</id>
    </interactant>
    <interactant intactId="EBI-1570181">
        <id>P55163</id>
        <label>gex-3</label>
    </interactant>
    <organismsDiffer>false</organismsDiffer>
    <experiments>4</experiments>
</comment>
<comment type="subcellular location">
    <subcellularLocation>
        <location evidence="3">Cytoplasm</location>
    </subcellularLocation>
    <text evidence="3">Enriched at cell boundaries.</text>
</comment>
<comment type="disruption phenotype">
    <text evidence="3 4 5">Embryonic lethal with cells differentiating, but failing to become organized (PubMed:11877381). The external hypodermal cells fail to spread over and enclose the embryo, but instead cluster on the dorsal side (PubMed:11877381). In one study, animals are viable and there is defective extension of body wall muscle connections or arms towards the ventral nerve cord (PubMed:27123983). In this same study, double knockout with madd-3 results in severe muscle arm extension defects (PubMed:27123983). RNAi-mediated knockdown results in reduced egg laying and in defective endocytosis by oocytes characterized by an accumulation of aggregated yolk protein in the pseudocoelomatic space (PubMed:19798448).</text>
</comment>
<comment type="similarity">
    <text evidence="1">Belongs to the CYFIP family.</text>
</comment>
<gene>
    <name evidence="8" type="primary">gex-2</name>
    <name evidence="8" type="ORF">F56A11.1</name>
</gene>
<proteinExistence type="evidence at protein level"/>
<reference evidence="6 7" key="1">
    <citation type="journal article" date="2002" name="Genes Dev.">
        <title>The GEX-2 and GEX-3 proteins are required for tissue morphogenesis and cell migrations in C. elegans.</title>
        <authorList>
            <person name="Soto M.C."/>
            <person name="Qadota H."/>
            <person name="Kasuya K."/>
            <person name="Inoue M."/>
            <person name="Tsuboi D."/>
            <person name="Mello C.C."/>
            <person name="Kaibuchi K."/>
        </authorList>
    </citation>
    <scope>NUCLEOTIDE SEQUENCE [MRNA]</scope>
    <scope>FUNCTION</scope>
    <scope>INTERACTION WITH GEX-3</scope>
    <scope>SUBCELLULAR LOCATION</scope>
    <scope>DISRUPTION PHENOTYPE</scope>
</reference>
<reference key="2">
    <citation type="journal article" date="1998" name="Science">
        <title>Genome sequence of the nematode C. elegans: a platform for investigating biology.</title>
        <authorList>
            <consortium name="The C. elegans sequencing consortium"/>
        </authorList>
    </citation>
    <scope>NUCLEOTIDE SEQUENCE [LARGE SCALE GENOMIC DNA]</scope>
    <source>
        <strain>Bristol N2</strain>
    </source>
</reference>
<reference key="3">
    <citation type="journal article" date="2009" name="PLoS Genet.">
        <title>Requirements for F-BAR proteins TOCA-1 and TOCA-2 in actin dynamics and membrane trafficking during Caenorhabditis elegans oocyte growth and embryonic epidermal morphogenesis.</title>
        <authorList>
            <person name="Giuliani C."/>
            <person name="Troglio F."/>
            <person name="Bai Z."/>
            <person name="Patel F.B."/>
            <person name="Zucconi A."/>
            <person name="Malabarba M.G."/>
            <person name="Disanza A."/>
            <person name="Stradal T.B."/>
            <person name="Cassata G."/>
            <person name="Confalonieri S."/>
            <person name="Hardin J.D."/>
            <person name="Soto M.C."/>
            <person name="Grant B.D."/>
            <person name="Scita G."/>
        </authorList>
    </citation>
    <scope>FUNCTION</scope>
    <scope>DISRUPTION PHENOTYPE</scope>
</reference>
<reference key="4">
    <citation type="journal article" date="2016" name="PLoS Genet.">
        <title>The MADD-3 LAMMER kinase interacts with a p38 MAP kinase pathway to regulate the display of the EVA-1 guidance receptor in Caenorhabditis elegans.</title>
        <authorList>
            <person name="D'Souza S.A."/>
            <person name="Rajendran L."/>
            <person name="Bagg R."/>
            <person name="Barbier L."/>
            <person name="van Pel D.M."/>
            <person name="Moshiri H."/>
            <person name="Roy P.J."/>
        </authorList>
    </citation>
    <scope>FUNCTION</scope>
    <scope>DISRUPTION PHENOTYPE</scope>
</reference>
<feature type="chain" id="PRO_0000279713" description="Cytoplasmic FMR1-interacting protein homolog">
    <location>
        <begin position="1"/>
        <end position="1262"/>
    </location>
</feature>
<feature type="region of interest" description="Disordered" evidence="2">
    <location>
        <begin position="519"/>
        <end position="550"/>
    </location>
</feature>
<name>CYFIP_CAEEL</name>
<accession>O44518</accession>
<accession>Q95YG2</accession>
<protein>
    <recommendedName>
        <fullName>Cytoplasmic FMR1-interacting protein homolog</fullName>
    </recommendedName>
    <alternativeName>
        <fullName>Gut on exterior protein 2</fullName>
    </alternativeName>
</protein>
<evidence type="ECO:0000255" key="1"/>
<evidence type="ECO:0000256" key="2">
    <source>
        <dbReference type="SAM" id="MobiDB-lite"/>
    </source>
</evidence>
<evidence type="ECO:0000269" key="3">
    <source>
    </source>
</evidence>
<evidence type="ECO:0000269" key="4">
    <source>
    </source>
</evidence>
<evidence type="ECO:0000269" key="5">
    <source>
    </source>
</evidence>
<evidence type="ECO:0000305" key="6"/>
<evidence type="ECO:0000312" key="7">
    <source>
        <dbReference type="EMBL" id="BAB70472.1"/>
    </source>
</evidence>
<evidence type="ECO:0000312" key="8">
    <source>
        <dbReference type="WormBase" id="F56A11.1"/>
    </source>
</evidence>
<dbReference type="EMBL" id="AB073209">
    <property type="protein sequence ID" value="BAB70472.1"/>
    <property type="molecule type" value="mRNA"/>
</dbReference>
<dbReference type="EMBL" id="FO080624">
    <property type="protein sequence ID" value="CCD65256.1"/>
    <property type="molecule type" value="Genomic_DNA"/>
</dbReference>
<dbReference type="PIR" id="T32647">
    <property type="entry name" value="T32647"/>
</dbReference>
<dbReference type="RefSeq" id="NP_499949.2">
    <property type="nucleotide sequence ID" value="NM_067548.4"/>
</dbReference>
<dbReference type="SMR" id="O44518"/>
<dbReference type="BioGRID" id="42046">
    <property type="interactions" value="5"/>
</dbReference>
<dbReference type="FunCoup" id="O44518">
    <property type="interactions" value="2757"/>
</dbReference>
<dbReference type="IntAct" id="O44518">
    <property type="interactions" value="1"/>
</dbReference>
<dbReference type="STRING" id="6239.F56A11.1.2"/>
<dbReference type="PaxDb" id="6239-F56A11.1"/>
<dbReference type="PeptideAtlas" id="O44518"/>
<dbReference type="EnsemblMetazoa" id="F56A11.1.1">
    <property type="protein sequence ID" value="F56A11.1.1"/>
    <property type="gene ID" value="WBGene00001579"/>
</dbReference>
<dbReference type="GeneID" id="176885"/>
<dbReference type="KEGG" id="cel:CELE_F56A11.1"/>
<dbReference type="UCSC" id="F56A11.1">
    <property type="organism name" value="c. elegans"/>
</dbReference>
<dbReference type="AGR" id="WB:WBGene00001579"/>
<dbReference type="CTD" id="176885"/>
<dbReference type="WormBase" id="F56A11.1">
    <property type="protein sequence ID" value="CE31351"/>
    <property type="gene ID" value="WBGene00001579"/>
    <property type="gene designation" value="gex-2"/>
</dbReference>
<dbReference type="eggNOG" id="KOG3534">
    <property type="taxonomic scope" value="Eukaryota"/>
</dbReference>
<dbReference type="GeneTree" id="ENSGT00500000044831"/>
<dbReference type="HOGENOM" id="CLU_002688_2_1_1"/>
<dbReference type="InParanoid" id="O44518"/>
<dbReference type="OMA" id="DQPNRVE"/>
<dbReference type="OrthoDB" id="10265867at2759"/>
<dbReference type="PhylomeDB" id="O44518"/>
<dbReference type="Reactome" id="R-CEL-2029482">
    <property type="pathway name" value="Regulation of actin dynamics for phagocytic cup formation"/>
</dbReference>
<dbReference type="Reactome" id="R-CEL-5663213">
    <property type="pathway name" value="RHO GTPases Activate WASPs and WAVEs"/>
</dbReference>
<dbReference type="Reactome" id="R-CEL-6798695">
    <property type="pathway name" value="Neutrophil degranulation"/>
</dbReference>
<dbReference type="Reactome" id="R-CEL-9013149">
    <property type="pathway name" value="RAC1 GTPase cycle"/>
</dbReference>
<dbReference type="Reactome" id="R-CEL-9013404">
    <property type="pathway name" value="RAC2 GTPase cycle"/>
</dbReference>
<dbReference type="Reactome" id="R-CEL-9013408">
    <property type="pathway name" value="RHOG GTPase cycle"/>
</dbReference>
<dbReference type="Reactome" id="R-CEL-9013423">
    <property type="pathway name" value="RAC3 GTPase cycle"/>
</dbReference>
<dbReference type="PRO" id="PR:O44518"/>
<dbReference type="Proteomes" id="UP000001940">
    <property type="component" value="Chromosome IV"/>
</dbReference>
<dbReference type="Bgee" id="WBGene00001579">
    <property type="expression patterns" value="Expressed in embryo and 4 other cell types or tissues"/>
</dbReference>
<dbReference type="GO" id="GO:0030054">
    <property type="term" value="C:cell junction"/>
    <property type="evidence" value="ECO:0000314"/>
    <property type="project" value="WormBase"/>
</dbReference>
<dbReference type="GO" id="GO:0043005">
    <property type="term" value="C:neuron projection"/>
    <property type="evidence" value="ECO:0000318"/>
    <property type="project" value="GO_Central"/>
</dbReference>
<dbReference type="GO" id="GO:0031209">
    <property type="term" value="C:SCAR complex"/>
    <property type="evidence" value="ECO:0000314"/>
    <property type="project" value="WormBase"/>
</dbReference>
<dbReference type="GO" id="GO:0045202">
    <property type="term" value="C:synapse"/>
    <property type="evidence" value="ECO:0000318"/>
    <property type="project" value="GO_Central"/>
</dbReference>
<dbReference type="GO" id="GO:0000340">
    <property type="term" value="F:RNA 7-methylguanosine cap binding"/>
    <property type="evidence" value="ECO:0000318"/>
    <property type="project" value="GO_Central"/>
</dbReference>
<dbReference type="GO" id="GO:0031267">
    <property type="term" value="F:small GTPase binding"/>
    <property type="evidence" value="ECO:0007669"/>
    <property type="project" value="InterPro"/>
</dbReference>
<dbReference type="GO" id="GO:0007411">
    <property type="term" value="P:axon guidance"/>
    <property type="evidence" value="ECO:0000318"/>
    <property type="project" value="GO_Central"/>
</dbReference>
<dbReference type="GO" id="GO:0016477">
    <property type="term" value="P:cell migration"/>
    <property type="evidence" value="ECO:0000315"/>
    <property type="project" value="UniProtKB"/>
</dbReference>
<dbReference type="GO" id="GO:0000902">
    <property type="term" value="P:cell morphogenesis"/>
    <property type="evidence" value="ECO:0000318"/>
    <property type="project" value="GO_Central"/>
</dbReference>
<dbReference type="GO" id="GO:0030031">
    <property type="term" value="P:cell projection assembly"/>
    <property type="evidence" value="ECO:0000318"/>
    <property type="project" value="GO_Central"/>
</dbReference>
<dbReference type="GO" id="GO:0010172">
    <property type="term" value="P:embryonic body morphogenesis"/>
    <property type="evidence" value="ECO:0000315"/>
    <property type="project" value="UniProtKB"/>
</dbReference>
<dbReference type="GO" id="GO:2000370">
    <property type="term" value="P:positive regulation of clathrin-dependent endocytosis"/>
    <property type="evidence" value="ECO:0000315"/>
    <property type="project" value="UniProtKB"/>
</dbReference>
<dbReference type="GO" id="GO:1901046">
    <property type="term" value="P:positive regulation of egg-laying behavior"/>
    <property type="evidence" value="ECO:0000315"/>
    <property type="project" value="UniProtKB"/>
</dbReference>
<dbReference type="GO" id="GO:0030833">
    <property type="term" value="P:regulation of actin filament polymerization"/>
    <property type="evidence" value="ECO:0007669"/>
    <property type="project" value="InterPro"/>
</dbReference>
<dbReference type="GO" id="GO:0006417">
    <property type="term" value="P:regulation of translation"/>
    <property type="evidence" value="ECO:0000318"/>
    <property type="project" value="GO_Central"/>
</dbReference>
<dbReference type="InterPro" id="IPR009828">
    <property type="entry name" value="CYRIA/CYRIB_Rac1-bd"/>
</dbReference>
<dbReference type="InterPro" id="IPR008081">
    <property type="entry name" value="Cytoplasmic_FMR1-int"/>
</dbReference>
<dbReference type="PANTHER" id="PTHR12195">
    <property type="entry name" value="CYTOPLASMIC FMR1-INTERACTING PROTEIN-RELATED"/>
    <property type="match status" value="1"/>
</dbReference>
<dbReference type="Pfam" id="PF07159">
    <property type="entry name" value="CYRIA-B_Rac1-bd"/>
    <property type="match status" value="1"/>
</dbReference>
<dbReference type="Pfam" id="PF05994">
    <property type="entry name" value="FragX_IP"/>
    <property type="match status" value="1"/>
</dbReference>
<dbReference type="PIRSF" id="PIRSF008153">
    <property type="entry name" value="FMR1_interacting"/>
    <property type="match status" value="1"/>
</dbReference>
<dbReference type="PRINTS" id="PR01698">
    <property type="entry name" value="CYTOFMRPINTP"/>
</dbReference>
<sequence>MNANVTVDDAISNVNLLDTLAIPDDLPDIEARALPLLYRSNFDTNFEDRSAFVTGIAKYSEEATRHAQFNDMLSEGLQHAANMYTWRCCSRAVPMAKSNDQPNRTEINEMVVEVLKPEVSKLGSFMRFTLTAIQRFCEEVRRLCHSEKRRDFVSEAYLLTLGRFINMFAVLDELKNMKASIKNDFSTFRRASQFLTAMSDTQAVHDMQNLSMFLATQNKIKDDLKLQMKTIEGYEELLCDVVNICAHMYEHQLYLSPNEKHMFVKVIAFSLFLMDGDAANVAKLDQKKRLSISRLDKIFKTLEVVPLYGDMQIQPFAFVRRSSHYEPSKWPLSDKESDRCHVNIVEKVQSIRSDHESYVTQFAKINNEVAICDRPGNDSENREITSLALSGIQLLCQWSCAVVETISWKLLNPTNPKDNRECPENAEEYERATRYNYSPAEKTALIQIIAMIKGLQSMLGKTESDMSNSTRKCVYVELQAFIHHTINEPLQKAVKHKKDLLASILQSVKDSISDAGNELNRMTDVKGKKKSSAPKGDSANSSSSDIRIPRRTAAPGSTQLYMARTQLESLISDKLCGGKKILRKELDSKTIEKISVFLRKSAHWPALFRLSDSMTEAGELSQLWFREFYLEMTMGQRIQFPIEMSMPWILTDYILSCNEPSLIESALYQLDLYNDAAQYSLFNFNKQFLYDEVEAEVNLCFDQFVYKLSEMVFTHYKQLASCMLLDKRFKAEILRSGTMIRSPSAARFESLLQQRHVQLLGRSVDLNRVVSQRVNMALLKALDAAIWKFESEPLSSIVELDMLIDTNRLCHTLLSDVLHSIAPFDDLFQEANHAVNSPHGRITLHVFWELNYDFVPNFVYNGSTHRFVRARHVFRKTPAREKPPQVGQVYYWGSKSLMAAFMNICNAYSQCIGTQHLKAITRLLHYQGIAVILDELLKMTNRLLNDKIRRHVRNVFNMMPKVCKLPRSDYGSNALLQYYVHHLEAVGKYPELKSEFCQDLRELGNMIVFCQQLEVALGQEEAHDLFLAAAYTGTVPQPPARNAQEQMKQLAKLEDKYSRIHLTEIIDKISPDDGQAAIAKDAELMTKERLCCGLNAFENFLVRIKQMLAADDIWTGGYPTNGVFWIDECVEWYRVYSALQFFLCQPTRDDNEVYAEELFGDSLQWGGLTLITLLGQHRRFEVLDFCYHLHRVNKADGKDEVISGIRLAKMVERIRRFQLLNNQIFIILENQLNENNDDPNERVREFAPPVHPNYANHAARRQ</sequence>
<organism>
    <name type="scientific">Caenorhabditis elegans</name>
    <dbReference type="NCBI Taxonomy" id="6239"/>
    <lineage>
        <taxon>Eukaryota</taxon>
        <taxon>Metazoa</taxon>
        <taxon>Ecdysozoa</taxon>
        <taxon>Nematoda</taxon>
        <taxon>Chromadorea</taxon>
        <taxon>Rhabditida</taxon>
        <taxon>Rhabditina</taxon>
        <taxon>Rhabditomorpha</taxon>
        <taxon>Rhabditoidea</taxon>
        <taxon>Rhabditidae</taxon>
        <taxon>Peloderinae</taxon>
        <taxon>Caenorhabditis</taxon>
    </lineage>
</organism>
<keyword id="KW-0963">Cytoplasm</keyword>
<keyword id="KW-0217">Developmental protein</keyword>
<keyword id="KW-1185">Reference proteome</keyword>